<gene>
    <name evidence="4" type="primary">WAV2</name>
    <name evidence="6" type="ordered locus">At5g20520</name>
</gene>
<organism>
    <name type="scientific">Arabidopsis thaliana</name>
    <name type="common">Mouse-ear cress</name>
    <dbReference type="NCBI Taxonomy" id="3702"/>
    <lineage>
        <taxon>Eukaryota</taxon>
        <taxon>Viridiplantae</taxon>
        <taxon>Streptophyta</taxon>
        <taxon>Embryophyta</taxon>
        <taxon>Tracheophyta</taxon>
        <taxon>Spermatophyta</taxon>
        <taxon>Magnoliopsida</taxon>
        <taxon>eudicotyledons</taxon>
        <taxon>Gunneridae</taxon>
        <taxon>Pentapetalae</taxon>
        <taxon>rosids</taxon>
        <taxon>malvids</taxon>
        <taxon>Brassicales</taxon>
        <taxon>Brassicaceae</taxon>
        <taxon>Camelineae</taxon>
        <taxon>Arabidopsis</taxon>
    </lineage>
</organism>
<accession>Q8RXP6</accession>
<keyword id="KW-1003">Cell membrane</keyword>
<keyword id="KW-0378">Hydrolase</keyword>
<keyword id="KW-0472">Membrane</keyword>
<keyword id="KW-1185">Reference proteome</keyword>
<keyword id="KW-0812">Transmembrane</keyword>
<keyword id="KW-1133">Transmembrane helix</keyword>
<protein>
    <recommendedName>
        <fullName evidence="5">Alpha/beta hydrolase domain-containing protein WAV2</fullName>
        <ecNumber evidence="5">3.-.-.-</ecNumber>
    </recommendedName>
    <alternativeName>
        <fullName evidence="4">Protein WAVY GROWTH 2</fullName>
    </alternativeName>
</protein>
<feature type="chain" id="PRO_0000443503" description="Alpha/beta hydrolase domain-containing protein WAV2">
    <location>
        <begin position="1"/>
        <end position="308"/>
    </location>
</feature>
<feature type="transmembrane region" description="Helical" evidence="2">
    <location>
        <begin position="6"/>
        <end position="26"/>
    </location>
</feature>
<feature type="active site" description="Charge relay system" evidence="1">
    <location>
        <position position="159"/>
    </location>
</feature>
<feature type="active site" description="Charge relay system" evidence="1">
    <location>
        <position position="243"/>
    </location>
</feature>
<feature type="active site" description="Charge relay system" evidence="1">
    <location>
        <position position="308"/>
    </location>
</feature>
<proteinExistence type="evidence at transcript level"/>
<comment type="function">
    <text evidence="3">Involved in the regulation of root growth. Involved in the suppression of the root bending in response to touch stimuli, gravity and light. Negatively regulates stimulus-induced root bending through inhibition of root tip rotation.</text>
</comment>
<comment type="subcellular location">
    <subcellularLocation>
        <location evidence="3">Cell membrane</location>
        <topology evidence="2">Single-pass membrane protein</topology>
    </subcellularLocation>
</comment>
<comment type="tissue specificity">
    <text evidence="3">Expressed in roots, rosette leaves, stems and flowers.</text>
</comment>
<comment type="disruption phenotype">
    <text evidence="3">No visible phenotype under normal growth conditions, but mutant seedlings exhibit enhanced root wavy growth and curvature in response to gravitropism and phototropism.</text>
</comment>
<comment type="similarity">
    <text evidence="5">Belongs to the serine esterase family.</text>
</comment>
<reference key="1">
    <citation type="journal article" date="2005" name="Plant Cell">
        <title>The Arabidopsis WAVY GROWTH 2 protein modulates root bending in response to environmental stimuli.</title>
        <authorList>
            <person name="Mochizuki S."/>
            <person name="Harada A."/>
            <person name="Inada S."/>
            <person name="Sugimoto-Shirasu K."/>
            <person name="Stacey N."/>
            <person name="Wada T."/>
            <person name="Ishiguro S."/>
            <person name="Okada K."/>
            <person name="Sakai T."/>
        </authorList>
    </citation>
    <scope>NUCLEOTIDE SEQUENCE [MRNA]</scope>
    <scope>FUNCTION</scope>
    <scope>SUBCELLULAR LOCATION</scope>
    <scope>TISSUE SPECIFICITY</scope>
    <scope>DISRUPTION PHENOTYPE</scope>
    <source>
        <strain>cv. Columbia</strain>
    </source>
</reference>
<reference key="2">
    <citation type="journal article" date="2000" name="Nature">
        <title>Sequence and analysis of chromosome 5 of the plant Arabidopsis thaliana.</title>
        <authorList>
            <person name="Tabata S."/>
            <person name="Kaneko T."/>
            <person name="Nakamura Y."/>
            <person name="Kotani H."/>
            <person name="Kato T."/>
            <person name="Asamizu E."/>
            <person name="Miyajima N."/>
            <person name="Sasamoto S."/>
            <person name="Kimura T."/>
            <person name="Hosouchi T."/>
            <person name="Kawashima K."/>
            <person name="Kohara M."/>
            <person name="Matsumoto M."/>
            <person name="Matsuno A."/>
            <person name="Muraki A."/>
            <person name="Nakayama S."/>
            <person name="Nakazaki N."/>
            <person name="Naruo K."/>
            <person name="Okumura S."/>
            <person name="Shinpo S."/>
            <person name="Takeuchi C."/>
            <person name="Wada T."/>
            <person name="Watanabe A."/>
            <person name="Yamada M."/>
            <person name="Yasuda M."/>
            <person name="Sato S."/>
            <person name="de la Bastide M."/>
            <person name="Huang E."/>
            <person name="Spiegel L."/>
            <person name="Gnoj L."/>
            <person name="O'Shaughnessy A."/>
            <person name="Preston R."/>
            <person name="Habermann K."/>
            <person name="Murray J."/>
            <person name="Johnson D."/>
            <person name="Rohlfing T."/>
            <person name="Nelson J."/>
            <person name="Stoneking T."/>
            <person name="Pepin K."/>
            <person name="Spieth J."/>
            <person name="Sekhon M."/>
            <person name="Armstrong J."/>
            <person name="Becker M."/>
            <person name="Belter E."/>
            <person name="Cordum H."/>
            <person name="Cordes M."/>
            <person name="Courtney L."/>
            <person name="Courtney W."/>
            <person name="Dante M."/>
            <person name="Du H."/>
            <person name="Edwards J."/>
            <person name="Fryman J."/>
            <person name="Haakensen B."/>
            <person name="Lamar E."/>
            <person name="Latreille P."/>
            <person name="Leonard S."/>
            <person name="Meyer R."/>
            <person name="Mulvaney E."/>
            <person name="Ozersky P."/>
            <person name="Riley A."/>
            <person name="Strowmatt C."/>
            <person name="Wagner-McPherson C."/>
            <person name="Wollam A."/>
            <person name="Yoakum M."/>
            <person name="Bell M."/>
            <person name="Dedhia N."/>
            <person name="Parnell L."/>
            <person name="Shah R."/>
            <person name="Rodriguez M."/>
            <person name="Hoon See L."/>
            <person name="Vil D."/>
            <person name="Baker J."/>
            <person name="Kirchoff K."/>
            <person name="Toth K."/>
            <person name="King L."/>
            <person name="Bahret A."/>
            <person name="Miller B."/>
            <person name="Marra M.A."/>
            <person name="Martienssen R."/>
            <person name="McCombie W.R."/>
            <person name="Wilson R.K."/>
            <person name="Murphy G."/>
            <person name="Bancroft I."/>
            <person name="Volckaert G."/>
            <person name="Wambutt R."/>
            <person name="Duesterhoeft A."/>
            <person name="Stiekema W."/>
            <person name="Pohl T."/>
            <person name="Entian K.-D."/>
            <person name="Terryn N."/>
            <person name="Hartley N."/>
            <person name="Bent E."/>
            <person name="Johnson S."/>
            <person name="Langham S.-A."/>
            <person name="McCullagh B."/>
            <person name="Robben J."/>
            <person name="Grymonprez B."/>
            <person name="Zimmermann W."/>
            <person name="Ramsperger U."/>
            <person name="Wedler H."/>
            <person name="Balke K."/>
            <person name="Wedler E."/>
            <person name="Peters S."/>
            <person name="van Staveren M."/>
            <person name="Dirkse W."/>
            <person name="Mooijman P."/>
            <person name="Klein Lankhorst R."/>
            <person name="Weitzenegger T."/>
            <person name="Bothe G."/>
            <person name="Rose M."/>
            <person name="Hauf J."/>
            <person name="Berneiser S."/>
            <person name="Hempel S."/>
            <person name="Feldpausch M."/>
            <person name="Lamberth S."/>
            <person name="Villarroel R."/>
            <person name="Gielen J."/>
            <person name="Ardiles W."/>
            <person name="Bents O."/>
            <person name="Lemcke K."/>
            <person name="Kolesov G."/>
            <person name="Mayer K.F.X."/>
            <person name="Rudd S."/>
            <person name="Schoof H."/>
            <person name="Schueller C."/>
            <person name="Zaccaria P."/>
            <person name="Mewes H.-W."/>
            <person name="Bevan M."/>
            <person name="Fransz P.F."/>
        </authorList>
    </citation>
    <scope>NUCLEOTIDE SEQUENCE [LARGE SCALE GENOMIC DNA]</scope>
    <source>
        <strain>cv. Columbia</strain>
    </source>
</reference>
<reference key="3">
    <citation type="journal article" date="2017" name="Plant J.">
        <title>Araport11: a complete reannotation of the Arabidopsis thaliana reference genome.</title>
        <authorList>
            <person name="Cheng C.Y."/>
            <person name="Krishnakumar V."/>
            <person name="Chan A.P."/>
            <person name="Thibaud-Nissen F."/>
            <person name="Schobel S."/>
            <person name="Town C.D."/>
        </authorList>
    </citation>
    <scope>GENOME REANNOTATION</scope>
    <source>
        <strain>cv. Columbia</strain>
    </source>
</reference>
<reference key="4">
    <citation type="journal article" date="2003" name="Science">
        <title>Empirical analysis of transcriptional activity in the Arabidopsis genome.</title>
        <authorList>
            <person name="Yamada K."/>
            <person name="Lim J."/>
            <person name="Dale J.M."/>
            <person name="Chen H."/>
            <person name="Shinn P."/>
            <person name="Palm C.J."/>
            <person name="Southwick A.M."/>
            <person name="Wu H.C."/>
            <person name="Kim C.J."/>
            <person name="Nguyen M."/>
            <person name="Pham P.K."/>
            <person name="Cheuk R.F."/>
            <person name="Karlin-Newmann G."/>
            <person name="Liu S.X."/>
            <person name="Lam B."/>
            <person name="Sakano H."/>
            <person name="Wu T."/>
            <person name="Yu G."/>
            <person name="Miranda M."/>
            <person name="Quach H.L."/>
            <person name="Tripp M."/>
            <person name="Chang C.H."/>
            <person name="Lee J.M."/>
            <person name="Toriumi M.J."/>
            <person name="Chan M.M."/>
            <person name="Tang C.C."/>
            <person name="Onodera C.S."/>
            <person name="Deng J.M."/>
            <person name="Akiyama K."/>
            <person name="Ansari Y."/>
            <person name="Arakawa T."/>
            <person name="Banh J."/>
            <person name="Banno F."/>
            <person name="Bowser L."/>
            <person name="Brooks S.Y."/>
            <person name="Carninci P."/>
            <person name="Chao Q."/>
            <person name="Choy N."/>
            <person name="Enju A."/>
            <person name="Goldsmith A.D."/>
            <person name="Gurjal M."/>
            <person name="Hansen N.F."/>
            <person name="Hayashizaki Y."/>
            <person name="Johnson-Hopson C."/>
            <person name="Hsuan V.W."/>
            <person name="Iida K."/>
            <person name="Karnes M."/>
            <person name="Khan S."/>
            <person name="Koesema E."/>
            <person name="Ishida J."/>
            <person name="Jiang P.X."/>
            <person name="Jones T."/>
            <person name="Kawai J."/>
            <person name="Kamiya A."/>
            <person name="Meyers C."/>
            <person name="Nakajima M."/>
            <person name="Narusaka M."/>
            <person name="Seki M."/>
            <person name="Sakurai T."/>
            <person name="Satou M."/>
            <person name="Tamse R."/>
            <person name="Vaysberg M."/>
            <person name="Wallender E.K."/>
            <person name="Wong C."/>
            <person name="Yamamura Y."/>
            <person name="Yuan S."/>
            <person name="Shinozaki K."/>
            <person name="Davis R.W."/>
            <person name="Theologis A."/>
            <person name="Ecker J.R."/>
        </authorList>
    </citation>
    <scope>NUCLEOTIDE SEQUENCE [LARGE SCALE MRNA]</scope>
    <source>
        <strain>cv. Columbia</strain>
    </source>
</reference>
<sequence>MVTYVSALFYGFGGIVVAGVALLVAFQEKLVYVPVLPGLSKSYPITPARLNLIYEDIWLQSSDGVRLHAWFIKMFPECRGPTILFFQENAGNIAHRLEMVRIMIQKLKCNVFMLSYRGYGASEGYPSQQGIIKDAQAALDHLSGRTDIDTSRIVVFGRSLGGAVGAVLTKNNPDKVSALILENTFTSILDMAGVLLPFLKWFIGGSGTKSLKLLNFVVRSPWKTIDAIAEIKQPVLFLSGLQDEMVPPFHMKMLYAKAAARNPQCTFVEFPSGMHMDTWLSGGEVYWKTNLQFLEKYAPEKRKEDTGR</sequence>
<evidence type="ECO:0000250" key="1">
    <source>
        <dbReference type="UniProtKB" id="Q53547"/>
    </source>
</evidence>
<evidence type="ECO:0000255" key="2"/>
<evidence type="ECO:0000269" key="3">
    <source>
    </source>
</evidence>
<evidence type="ECO:0000303" key="4">
    <source>
    </source>
</evidence>
<evidence type="ECO:0000305" key="5"/>
<evidence type="ECO:0000312" key="6">
    <source>
        <dbReference type="Araport" id="AT5G20520"/>
    </source>
</evidence>
<name>WAV2_ARATH</name>
<dbReference type="EC" id="3.-.-.-" evidence="5"/>
<dbReference type="EMBL" id="AB182157">
    <property type="protein sequence ID" value="BAD83800.1"/>
    <property type="molecule type" value="mRNA"/>
</dbReference>
<dbReference type="EMBL" id="AF296833">
    <property type="status" value="NOT_ANNOTATED_CDS"/>
    <property type="molecule type" value="Genomic_DNA"/>
</dbReference>
<dbReference type="EMBL" id="CP002688">
    <property type="protein sequence ID" value="AED92855.1"/>
    <property type="molecule type" value="Genomic_DNA"/>
</dbReference>
<dbReference type="EMBL" id="AY080751">
    <property type="protein sequence ID" value="AAL85997.1"/>
    <property type="molecule type" value="mRNA"/>
</dbReference>
<dbReference type="EMBL" id="AY114009">
    <property type="protein sequence ID" value="AAM45057.1"/>
    <property type="molecule type" value="mRNA"/>
</dbReference>
<dbReference type="EMBL" id="AY087569">
    <property type="protein sequence ID" value="AAM65111.1"/>
    <property type="molecule type" value="mRNA"/>
</dbReference>
<dbReference type="RefSeq" id="NP_568395.1">
    <property type="nucleotide sequence ID" value="NM_122059.4"/>
</dbReference>
<dbReference type="SMR" id="Q8RXP6"/>
<dbReference type="FunCoup" id="Q8RXP6">
    <property type="interactions" value="3750"/>
</dbReference>
<dbReference type="IntAct" id="Q8RXP6">
    <property type="interactions" value="5"/>
</dbReference>
<dbReference type="STRING" id="3702.Q8RXP6"/>
<dbReference type="ESTHER" id="arath-AT5G20520">
    <property type="family name" value="ABHD13-BEM46"/>
</dbReference>
<dbReference type="MEROPS" id="S09.A24"/>
<dbReference type="GlyGen" id="Q8RXP6">
    <property type="glycosylation" value="1 site"/>
</dbReference>
<dbReference type="PaxDb" id="3702-AT5G20520.1"/>
<dbReference type="ProteomicsDB" id="242575"/>
<dbReference type="EnsemblPlants" id="AT5G20520.1">
    <property type="protein sequence ID" value="AT5G20520.1"/>
    <property type="gene ID" value="AT5G20520"/>
</dbReference>
<dbReference type="GeneID" id="832174"/>
<dbReference type="Gramene" id="AT5G20520.1">
    <property type="protein sequence ID" value="AT5G20520.1"/>
    <property type="gene ID" value="AT5G20520"/>
</dbReference>
<dbReference type="KEGG" id="ath:AT5G20520"/>
<dbReference type="Araport" id="AT5G20520"/>
<dbReference type="TAIR" id="AT5G20520">
    <property type="gene designation" value="WAV2"/>
</dbReference>
<dbReference type="eggNOG" id="KOG4391">
    <property type="taxonomic scope" value="Eukaryota"/>
</dbReference>
<dbReference type="HOGENOM" id="CLU_029375_2_0_1"/>
<dbReference type="InParanoid" id="Q8RXP6"/>
<dbReference type="OMA" id="QYWTSED"/>
<dbReference type="PhylomeDB" id="Q8RXP6"/>
<dbReference type="PRO" id="PR:Q8RXP6"/>
<dbReference type="Proteomes" id="UP000006548">
    <property type="component" value="Chromosome 5"/>
</dbReference>
<dbReference type="ExpressionAtlas" id="Q8RXP6">
    <property type="expression patterns" value="baseline and differential"/>
</dbReference>
<dbReference type="GO" id="GO:0005783">
    <property type="term" value="C:endoplasmic reticulum"/>
    <property type="evidence" value="ECO:0007005"/>
    <property type="project" value="TAIR"/>
</dbReference>
<dbReference type="GO" id="GO:0019866">
    <property type="term" value="C:organelle inner membrane"/>
    <property type="evidence" value="ECO:0000314"/>
    <property type="project" value="TAIR"/>
</dbReference>
<dbReference type="GO" id="GO:0005886">
    <property type="term" value="C:plasma membrane"/>
    <property type="evidence" value="ECO:0000314"/>
    <property type="project" value="TAIR"/>
</dbReference>
<dbReference type="GO" id="GO:0008474">
    <property type="term" value="F:palmitoyl-(protein) hydrolase activity"/>
    <property type="evidence" value="ECO:0000314"/>
    <property type="project" value="TAIR"/>
</dbReference>
<dbReference type="GO" id="GO:0008236">
    <property type="term" value="F:serine-type peptidase activity"/>
    <property type="evidence" value="ECO:0007669"/>
    <property type="project" value="InterPro"/>
</dbReference>
<dbReference type="GO" id="GO:0006508">
    <property type="term" value="P:proteolysis"/>
    <property type="evidence" value="ECO:0007669"/>
    <property type="project" value="InterPro"/>
</dbReference>
<dbReference type="GO" id="GO:0048364">
    <property type="term" value="P:root development"/>
    <property type="evidence" value="ECO:0000315"/>
    <property type="project" value="TAIR"/>
</dbReference>
<dbReference type="FunFam" id="3.40.50.1820:FF:000298">
    <property type="entry name" value="Bem46-like serine peptidase"/>
    <property type="match status" value="1"/>
</dbReference>
<dbReference type="Gene3D" id="3.40.50.1820">
    <property type="entry name" value="alpha/beta hydrolase"/>
    <property type="match status" value="1"/>
</dbReference>
<dbReference type="InterPro" id="IPR029058">
    <property type="entry name" value="AB_hydrolase_fold"/>
</dbReference>
<dbReference type="InterPro" id="IPR001375">
    <property type="entry name" value="Peptidase_S9_cat"/>
</dbReference>
<dbReference type="PANTHER" id="PTHR12277">
    <property type="entry name" value="ALPHA/BETA HYDROLASE DOMAIN-CONTAINING PROTEIN"/>
    <property type="match status" value="1"/>
</dbReference>
<dbReference type="PANTHER" id="PTHR12277:SF81">
    <property type="entry name" value="PROTEIN ABHD13"/>
    <property type="match status" value="1"/>
</dbReference>
<dbReference type="Pfam" id="PF00326">
    <property type="entry name" value="Peptidase_S9"/>
    <property type="match status" value="1"/>
</dbReference>
<dbReference type="SUPFAM" id="SSF53474">
    <property type="entry name" value="alpha/beta-Hydrolases"/>
    <property type="match status" value="1"/>
</dbReference>